<name>PLSC_BORBU</name>
<proteinExistence type="inferred from homology"/>
<evidence type="ECO:0000250" key="1"/>
<evidence type="ECO:0000305" key="2"/>
<accession>Q59188</accession>
<dbReference type="EC" id="2.3.1.51"/>
<dbReference type="EMBL" id="AE000783">
    <property type="protein sequence ID" value="AAC66417.1"/>
    <property type="molecule type" value="Genomic_DNA"/>
</dbReference>
<dbReference type="EMBL" id="L32861">
    <property type="protein sequence ID" value="AAC41407.1"/>
    <property type="molecule type" value="Genomic_DNA"/>
</dbReference>
<dbReference type="PIR" id="E70104">
    <property type="entry name" value="E70104"/>
</dbReference>
<dbReference type="RefSeq" id="NP_212171.1">
    <property type="nucleotide sequence ID" value="NC_001318.1"/>
</dbReference>
<dbReference type="RefSeq" id="WP_002665505.1">
    <property type="nucleotide sequence ID" value="NC_001318.1"/>
</dbReference>
<dbReference type="SMR" id="Q59188"/>
<dbReference type="STRING" id="224326.BB_0037"/>
<dbReference type="PaxDb" id="224326-BB_0037"/>
<dbReference type="EnsemblBacteria" id="AAC66417">
    <property type="protein sequence ID" value="AAC66417"/>
    <property type="gene ID" value="BB_0037"/>
</dbReference>
<dbReference type="KEGG" id="bbu:BB_0037"/>
<dbReference type="PATRIC" id="fig|224326.49.peg.436"/>
<dbReference type="HOGENOM" id="CLU_027938_6_1_12"/>
<dbReference type="OrthoDB" id="9803035at2"/>
<dbReference type="UniPathway" id="UPA00557">
    <property type="reaction ID" value="UER00613"/>
</dbReference>
<dbReference type="Proteomes" id="UP000001807">
    <property type="component" value="Chromosome"/>
</dbReference>
<dbReference type="GO" id="GO:0016020">
    <property type="term" value="C:membrane"/>
    <property type="evidence" value="ECO:0007669"/>
    <property type="project" value="InterPro"/>
</dbReference>
<dbReference type="GO" id="GO:0003841">
    <property type="term" value="F:1-acylglycerol-3-phosphate O-acyltransferase activity"/>
    <property type="evidence" value="ECO:0007669"/>
    <property type="project" value="UniProtKB-EC"/>
</dbReference>
<dbReference type="GO" id="GO:0016024">
    <property type="term" value="P:CDP-diacylglycerol biosynthetic process"/>
    <property type="evidence" value="ECO:0007669"/>
    <property type="project" value="UniProtKB-UniPathway"/>
</dbReference>
<dbReference type="GO" id="GO:0006654">
    <property type="term" value="P:phosphatidic acid biosynthetic process"/>
    <property type="evidence" value="ECO:0007669"/>
    <property type="project" value="TreeGrafter"/>
</dbReference>
<dbReference type="CDD" id="cd07989">
    <property type="entry name" value="LPLAT_AGPAT-like"/>
    <property type="match status" value="1"/>
</dbReference>
<dbReference type="InterPro" id="IPR004552">
    <property type="entry name" value="AGP_acyltrans"/>
</dbReference>
<dbReference type="InterPro" id="IPR002123">
    <property type="entry name" value="Plipid/glycerol_acylTrfase"/>
</dbReference>
<dbReference type="NCBIfam" id="TIGR00530">
    <property type="entry name" value="AGP_acyltrn"/>
    <property type="match status" value="1"/>
</dbReference>
<dbReference type="PANTHER" id="PTHR10434">
    <property type="entry name" value="1-ACYL-SN-GLYCEROL-3-PHOSPHATE ACYLTRANSFERASE"/>
    <property type="match status" value="1"/>
</dbReference>
<dbReference type="PANTHER" id="PTHR10434:SF64">
    <property type="entry name" value="1-ACYL-SN-GLYCEROL-3-PHOSPHATE ACYLTRANSFERASE-RELATED"/>
    <property type="match status" value="1"/>
</dbReference>
<dbReference type="Pfam" id="PF01553">
    <property type="entry name" value="Acyltransferase"/>
    <property type="match status" value="1"/>
</dbReference>
<dbReference type="SMART" id="SM00563">
    <property type="entry name" value="PlsC"/>
    <property type="match status" value="1"/>
</dbReference>
<dbReference type="SUPFAM" id="SSF69593">
    <property type="entry name" value="Glycerol-3-phosphate (1)-acyltransferase"/>
    <property type="match status" value="1"/>
</dbReference>
<keyword id="KW-0012">Acyltransferase</keyword>
<keyword id="KW-0444">Lipid biosynthesis</keyword>
<keyword id="KW-0443">Lipid metabolism</keyword>
<keyword id="KW-0594">Phospholipid biosynthesis</keyword>
<keyword id="KW-1208">Phospholipid metabolism</keyword>
<keyword id="KW-1185">Reference proteome</keyword>
<keyword id="KW-0808">Transferase</keyword>
<feature type="chain" id="PRO_0000208167" description="1-acyl-sn-glycerol-3-phosphate acyltransferase">
    <location>
        <begin position="1"/>
        <end position="250"/>
    </location>
</feature>
<feature type="short sequence motif" description="HXXXXD motif">
    <location>
        <begin position="88"/>
        <end position="93"/>
    </location>
</feature>
<sequence length="250" mass="28581">MIIVFMKILRSIITYFNVLLFFLILIFFLFPFYLVCKIFLIERYVVRLSFIMMRACIKISLWLAGIKIIVTGSENIPKKSNVIIMGNHIAAMDPLIFIYTFACPFVILAKHSLLRIPFVNIVLIVMGVIFVNRRSIRSAAAAEVKAIKVMREGRSIGIFPEGTRNRGGDTRVFKKGSIKMALKTGTSILPVTLYNTNNFFIKNIIFNSGLSVYIHVHPLIDVLKLSEYEKENLTSIIRDQIVKKLETIKI</sequence>
<gene>
    <name type="primary">plsC</name>
    <name type="ordered locus">BB_0037</name>
</gene>
<protein>
    <recommendedName>
        <fullName>1-acyl-sn-glycerol-3-phosphate acyltransferase</fullName>
        <shortName>1-AGP acyltransferase</shortName>
        <shortName>1-AGPAT</shortName>
        <ecNumber>2.3.1.51</ecNumber>
    </recommendedName>
    <alternativeName>
        <fullName>Lysophosphatidic acid acyltransferase</fullName>
        <shortName>LPAAT</shortName>
    </alternativeName>
</protein>
<comment type="function">
    <text>Converts lysophosphatidic acid (LPA) into phosphatidic acid by incorporating acyl moiety at the 2 position.</text>
</comment>
<comment type="catalytic activity">
    <reaction>
        <text>a 1-acyl-sn-glycero-3-phosphate + an acyl-CoA = a 1,2-diacyl-sn-glycero-3-phosphate + CoA</text>
        <dbReference type="Rhea" id="RHEA:19709"/>
        <dbReference type="ChEBI" id="CHEBI:57287"/>
        <dbReference type="ChEBI" id="CHEBI:57970"/>
        <dbReference type="ChEBI" id="CHEBI:58342"/>
        <dbReference type="ChEBI" id="CHEBI:58608"/>
        <dbReference type="EC" id="2.3.1.51"/>
    </reaction>
</comment>
<comment type="pathway">
    <text>Phospholipid metabolism; CDP-diacylglycerol biosynthesis; CDP-diacylglycerol from sn-glycerol 3-phosphate: step 2/3.</text>
</comment>
<comment type="domain">
    <text evidence="1">The HXXXXD motif is essential for acyltransferase activity and may constitute the binding site for the phosphate moiety of the glycerol-3-phosphate.</text>
</comment>
<comment type="similarity">
    <text evidence="2">Belongs to the 1-acyl-sn-glycerol-3-phosphate acyltransferase family.</text>
</comment>
<organism>
    <name type="scientific">Borreliella burgdorferi (strain ATCC 35210 / DSM 4680 / CIP 102532 / B31)</name>
    <name type="common">Borrelia burgdorferi</name>
    <dbReference type="NCBI Taxonomy" id="224326"/>
    <lineage>
        <taxon>Bacteria</taxon>
        <taxon>Pseudomonadati</taxon>
        <taxon>Spirochaetota</taxon>
        <taxon>Spirochaetia</taxon>
        <taxon>Spirochaetales</taxon>
        <taxon>Borreliaceae</taxon>
        <taxon>Borreliella</taxon>
    </lineage>
</organism>
<reference key="1">
    <citation type="journal article" date="1997" name="Nature">
        <title>Genomic sequence of a Lyme disease spirochaete, Borrelia burgdorferi.</title>
        <authorList>
            <person name="Fraser C.M."/>
            <person name="Casjens S."/>
            <person name="Huang W.M."/>
            <person name="Sutton G.G."/>
            <person name="Clayton R.A."/>
            <person name="Lathigra R."/>
            <person name="White O."/>
            <person name="Ketchum K.A."/>
            <person name="Dodson R.J."/>
            <person name="Hickey E.K."/>
            <person name="Gwinn M.L."/>
            <person name="Dougherty B.A."/>
            <person name="Tomb J.-F."/>
            <person name="Fleischmann R.D."/>
            <person name="Richardson D.L."/>
            <person name="Peterson J.D."/>
            <person name="Kerlavage A.R."/>
            <person name="Quackenbush J."/>
            <person name="Salzberg S.L."/>
            <person name="Hanson M."/>
            <person name="van Vugt R."/>
            <person name="Palmer N."/>
            <person name="Adams M.D."/>
            <person name="Gocayne J.D."/>
            <person name="Weidman J.F."/>
            <person name="Utterback T.R."/>
            <person name="Watthey L."/>
            <person name="McDonald L.A."/>
            <person name="Artiach P."/>
            <person name="Bowman C."/>
            <person name="Garland S.A."/>
            <person name="Fujii C."/>
            <person name="Cotton M.D."/>
            <person name="Horst K."/>
            <person name="Roberts K.M."/>
            <person name="Hatch B."/>
            <person name="Smith H.O."/>
            <person name="Venter J.C."/>
        </authorList>
    </citation>
    <scope>NUCLEOTIDE SEQUENCE [LARGE SCALE GENOMIC DNA]</scope>
    <source>
        <strain>ATCC 35210 / DSM 4680 / CIP 102532 / B31</strain>
    </source>
</reference>
<reference key="2">
    <citation type="journal article" date="1994" name="Microbiology">
        <title>Conservation of gene arrangement and an unusual organization of rRNA genes in the linear chromosomes of the Lyme disease spirochaetes Borrelia burgdorferi, B. garinii and B. afzelii.</title>
        <authorList>
            <person name="Ojaimi C."/>
            <person name="Davidson B.E."/>
            <person name="Saint-Girons I."/>
            <person name="Old I.G."/>
        </authorList>
    </citation>
    <scope>NUCLEOTIDE SEQUENCE [GENOMIC DNA] OF 116-250</scope>
    <source>
        <strain>212</strain>
    </source>
</reference>